<sequence>MSTAEKVQPRLKQRYRSEIREALNKQFSYGNVMQIPTVVKVVVNMGVGDAARDAKLINGAVSDLALITGQKPEVRKARKSIAQFKLREGMPIGVRVTLRDDRMWEFLDRLTSIALPRIRDFRGLSPKQFDGVGNYTFGLAEQSVFHEIDVDKIDRVRGMDINVVTSATTDDEGRALLRALGFPFKEN</sequence>
<keyword id="KW-0687">Ribonucleoprotein</keyword>
<keyword id="KW-0689">Ribosomal protein</keyword>
<keyword id="KW-0694">RNA-binding</keyword>
<keyword id="KW-0699">rRNA-binding</keyword>
<keyword id="KW-0820">tRNA-binding</keyword>
<dbReference type="EMBL" id="FM211192">
    <property type="protein sequence ID" value="CAR71943.1"/>
    <property type="molecule type" value="Genomic_DNA"/>
</dbReference>
<dbReference type="SMR" id="B8ZSA7"/>
<dbReference type="KEGG" id="mlb:MLBr01847"/>
<dbReference type="HOGENOM" id="CLU_061015_2_1_11"/>
<dbReference type="Proteomes" id="UP000006900">
    <property type="component" value="Chromosome"/>
</dbReference>
<dbReference type="GO" id="GO:1990904">
    <property type="term" value="C:ribonucleoprotein complex"/>
    <property type="evidence" value="ECO:0007669"/>
    <property type="project" value="UniProtKB-KW"/>
</dbReference>
<dbReference type="GO" id="GO:0005840">
    <property type="term" value="C:ribosome"/>
    <property type="evidence" value="ECO:0007669"/>
    <property type="project" value="UniProtKB-KW"/>
</dbReference>
<dbReference type="GO" id="GO:0019843">
    <property type="term" value="F:rRNA binding"/>
    <property type="evidence" value="ECO:0007669"/>
    <property type="project" value="UniProtKB-UniRule"/>
</dbReference>
<dbReference type="GO" id="GO:0003735">
    <property type="term" value="F:structural constituent of ribosome"/>
    <property type="evidence" value="ECO:0007669"/>
    <property type="project" value="InterPro"/>
</dbReference>
<dbReference type="GO" id="GO:0000049">
    <property type="term" value="F:tRNA binding"/>
    <property type="evidence" value="ECO:0007669"/>
    <property type="project" value="UniProtKB-UniRule"/>
</dbReference>
<dbReference type="GO" id="GO:0006412">
    <property type="term" value="P:translation"/>
    <property type="evidence" value="ECO:0007669"/>
    <property type="project" value="UniProtKB-UniRule"/>
</dbReference>
<dbReference type="FunFam" id="3.30.1440.10:FF:000001">
    <property type="entry name" value="50S ribosomal protein L5"/>
    <property type="match status" value="1"/>
</dbReference>
<dbReference type="Gene3D" id="3.30.1440.10">
    <property type="match status" value="1"/>
</dbReference>
<dbReference type="HAMAP" id="MF_01333_B">
    <property type="entry name" value="Ribosomal_uL5_B"/>
    <property type="match status" value="1"/>
</dbReference>
<dbReference type="InterPro" id="IPR002132">
    <property type="entry name" value="Ribosomal_uL5"/>
</dbReference>
<dbReference type="InterPro" id="IPR020930">
    <property type="entry name" value="Ribosomal_uL5_bac-type"/>
</dbReference>
<dbReference type="InterPro" id="IPR031309">
    <property type="entry name" value="Ribosomal_uL5_C"/>
</dbReference>
<dbReference type="InterPro" id="IPR022803">
    <property type="entry name" value="Ribosomal_uL5_dom_sf"/>
</dbReference>
<dbReference type="InterPro" id="IPR031310">
    <property type="entry name" value="Ribosomal_uL5_N"/>
</dbReference>
<dbReference type="NCBIfam" id="NF000585">
    <property type="entry name" value="PRK00010.1"/>
    <property type="match status" value="1"/>
</dbReference>
<dbReference type="PANTHER" id="PTHR11994">
    <property type="entry name" value="60S RIBOSOMAL PROTEIN L11-RELATED"/>
    <property type="match status" value="1"/>
</dbReference>
<dbReference type="Pfam" id="PF00281">
    <property type="entry name" value="Ribosomal_L5"/>
    <property type="match status" value="1"/>
</dbReference>
<dbReference type="Pfam" id="PF00673">
    <property type="entry name" value="Ribosomal_L5_C"/>
    <property type="match status" value="1"/>
</dbReference>
<dbReference type="PIRSF" id="PIRSF002161">
    <property type="entry name" value="Ribosomal_L5"/>
    <property type="match status" value="1"/>
</dbReference>
<dbReference type="SUPFAM" id="SSF55282">
    <property type="entry name" value="RL5-like"/>
    <property type="match status" value="1"/>
</dbReference>
<proteinExistence type="inferred from homology"/>
<organism>
    <name type="scientific">Mycobacterium leprae (strain Br4923)</name>
    <dbReference type="NCBI Taxonomy" id="561304"/>
    <lineage>
        <taxon>Bacteria</taxon>
        <taxon>Bacillati</taxon>
        <taxon>Actinomycetota</taxon>
        <taxon>Actinomycetes</taxon>
        <taxon>Mycobacteriales</taxon>
        <taxon>Mycobacteriaceae</taxon>
        <taxon>Mycobacterium</taxon>
    </lineage>
</organism>
<accession>B8ZSA7</accession>
<evidence type="ECO:0000255" key="1">
    <source>
        <dbReference type="HAMAP-Rule" id="MF_01333"/>
    </source>
</evidence>
<evidence type="ECO:0000305" key="2"/>
<feature type="chain" id="PRO_1000166140" description="Large ribosomal subunit protein uL5">
    <location>
        <begin position="1"/>
        <end position="187"/>
    </location>
</feature>
<name>RL5_MYCLB</name>
<reference key="1">
    <citation type="journal article" date="2009" name="Nat. Genet.">
        <title>Comparative genomic and phylogeographic analysis of Mycobacterium leprae.</title>
        <authorList>
            <person name="Monot M."/>
            <person name="Honore N."/>
            <person name="Garnier T."/>
            <person name="Zidane N."/>
            <person name="Sherafi D."/>
            <person name="Paniz-Mondolfi A."/>
            <person name="Matsuoka M."/>
            <person name="Taylor G.M."/>
            <person name="Donoghue H.D."/>
            <person name="Bouwman A."/>
            <person name="Mays S."/>
            <person name="Watson C."/>
            <person name="Lockwood D."/>
            <person name="Khamispour A."/>
            <person name="Dowlati Y."/>
            <person name="Jianping S."/>
            <person name="Rea T.H."/>
            <person name="Vera-Cabrera L."/>
            <person name="Stefani M.M."/>
            <person name="Banu S."/>
            <person name="Macdonald M."/>
            <person name="Sapkota B.R."/>
            <person name="Spencer J.S."/>
            <person name="Thomas J."/>
            <person name="Harshman K."/>
            <person name="Singh P."/>
            <person name="Busso P."/>
            <person name="Gattiker A."/>
            <person name="Rougemont J."/>
            <person name="Brennan P.J."/>
            <person name="Cole S.T."/>
        </authorList>
    </citation>
    <scope>NUCLEOTIDE SEQUENCE [LARGE SCALE GENOMIC DNA]</scope>
    <source>
        <strain>Br4923</strain>
    </source>
</reference>
<protein>
    <recommendedName>
        <fullName evidence="1">Large ribosomal subunit protein uL5</fullName>
    </recommendedName>
    <alternativeName>
        <fullName evidence="2">50S ribosomal protein L5</fullName>
    </alternativeName>
</protein>
<gene>
    <name evidence="1" type="primary">rplE</name>
    <name type="ordered locus">MLBr01847</name>
</gene>
<comment type="function">
    <text evidence="1">This is one of the proteins that bind and probably mediate the attachment of the 5S RNA into the large ribosomal subunit, where it forms part of the central protuberance. In the 70S ribosome it contacts protein S13 of the 30S subunit (bridge B1b), connecting the 2 subunits; this bridge is implicated in subunit movement. Contacts the P site tRNA; the 5S rRNA and some of its associated proteins might help stabilize positioning of ribosome-bound tRNAs.</text>
</comment>
<comment type="subunit">
    <text evidence="1">Part of the 50S ribosomal subunit; part of the 5S rRNA/L5/L18/L25 subcomplex. Contacts the 5S rRNA and the P site tRNA. Forms a bridge to the 30S subunit in the 70S ribosome.</text>
</comment>
<comment type="similarity">
    <text evidence="1">Belongs to the universal ribosomal protein uL5 family.</text>
</comment>